<organism>
    <name type="scientific">Propionibacterium freudenreichii subsp. freudenreichii</name>
    <dbReference type="NCBI Taxonomy" id="66712"/>
    <lineage>
        <taxon>Bacteria</taxon>
        <taxon>Bacillati</taxon>
        <taxon>Actinomycetota</taxon>
        <taxon>Actinomycetes</taxon>
        <taxon>Propionibacteriales</taxon>
        <taxon>Propionibacteriaceae</taxon>
        <taxon>Propionibacterium</taxon>
    </lineage>
</organism>
<name>GSA_PROFF</name>
<proteinExistence type="inferred from homology"/>
<sequence length="441" mass="45932">MSVSDELFAEALKVMPGGVSSPVRAYRSVGGTPRFVKRALGSHIVDVDDKRYVDLVCSWGPMIAGHAHPEVVAAVLQAVADSTSFGAPSEVELRLAQAVVARMGGAIDKVRFTCSGTEAVMTAARLARGITKRPLLVKFVGCYHGHSDSFLVSAGSGVASLGLPDSPGVPKEVAGDTVALPYGRIDMVEELFAERGDQVAAIVTEGVPANMGVIVPPEGFNRRLHDIAHAHGALLIQDEVLTGFRLSPTGAWGLQGAKEGWTPDLFTFGKVIGGGMPLAAVGGSAQLMDYLAPEGPVYQAGTLSGNPAACAAGLATLALMDDAAYSRLDATADRVSAMADAALESAGVPHRINKVSNLFSVFLTDAPVTDFASASKQDTKAFSRFFHAALDAGLWLAPSGFEAWFCSTALDDDDLEVIDAGLHKAAQAAAQGLSSLEDVRR</sequence>
<dbReference type="EC" id="5.4.3.8"/>
<dbReference type="EMBL" id="D12643">
    <property type="protein sequence ID" value="BAA02164.1"/>
    <property type="molecule type" value="Genomic_DNA"/>
</dbReference>
<dbReference type="EMBL" id="D85417">
    <property type="protein sequence ID" value="BAA21914.1"/>
    <property type="molecule type" value="Genomic_DNA"/>
</dbReference>
<dbReference type="PIR" id="A48959">
    <property type="entry name" value="A48959"/>
</dbReference>
<dbReference type="RefSeq" id="WP_044636331.1">
    <property type="nucleotide sequence ID" value="NZ_CP010341.1"/>
</dbReference>
<dbReference type="SMR" id="Q06774"/>
<dbReference type="KEGG" id="pfre:RM25_1796"/>
<dbReference type="UniPathway" id="UPA00251">
    <property type="reaction ID" value="UER00317"/>
</dbReference>
<dbReference type="GO" id="GO:0005737">
    <property type="term" value="C:cytoplasm"/>
    <property type="evidence" value="ECO:0007669"/>
    <property type="project" value="UniProtKB-SubCell"/>
</dbReference>
<dbReference type="GO" id="GO:0042286">
    <property type="term" value="F:glutamate-1-semialdehyde 2,1-aminomutase activity"/>
    <property type="evidence" value="ECO:0007669"/>
    <property type="project" value="UniProtKB-UniRule"/>
</dbReference>
<dbReference type="GO" id="GO:0030170">
    <property type="term" value="F:pyridoxal phosphate binding"/>
    <property type="evidence" value="ECO:0007669"/>
    <property type="project" value="InterPro"/>
</dbReference>
<dbReference type="GO" id="GO:0008483">
    <property type="term" value="F:transaminase activity"/>
    <property type="evidence" value="ECO:0007669"/>
    <property type="project" value="InterPro"/>
</dbReference>
<dbReference type="GO" id="GO:0006782">
    <property type="term" value="P:protoporphyrinogen IX biosynthetic process"/>
    <property type="evidence" value="ECO:0007669"/>
    <property type="project" value="UniProtKB-UniRule"/>
</dbReference>
<dbReference type="CDD" id="cd00610">
    <property type="entry name" value="OAT_like"/>
    <property type="match status" value="1"/>
</dbReference>
<dbReference type="FunFam" id="3.40.640.10:FF:000021">
    <property type="entry name" value="Glutamate-1-semialdehyde 2,1-aminomutase"/>
    <property type="match status" value="1"/>
</dbReference>
<dbReference type="Gene3D" id="3.90.1150.10">
    <property type="entry name" value="Aspartate Aminotransferase, domain 1"/>
    <property type="match status" value="1"/>
</dbReference>
<dbReference type="Gene3D" id="3.40.640.10">
    <property type="entry name" value="Type I PLP-dependent aspartate aminotransferase-like (Major domain)"/>
    <property type="match status" value="1"/>
</dbReference>
<dbReference type="HAMAP" id="MF_00375">
    <property type="entry name" value="HemL_aminotrans_3"/>
    <property type="match status" value="1"/>
</dbReference>
<dbReference type="InterPro" id="IPR004639">
    <property type="entry name" value="4pyrrol_synth_GluAld_NH2Trfase"/>
</dbReference>
<dbReference type="InterPro" id="IPR005814">
    <property type="entry name" value="Aminotrans_3"/>
</dbReference>
<dbReference type="InterPro" id="IPR049704">
    <property type="entry name" value="Aminotrans_3_PPA_site"/>
</dbReference>
<dbReference type="InterPro" id="IPR015424">
    <property type="entry name" value="PyrdxlP-dep_Trfase"/>
</dbReference>
<dbReference type="InterPro" id="IPR015421">
    <property type="entry name" value="PyrdxlP-dep_Trfase_major"/>
</dbReference>
<dbReference type="InterPro" id="IPR015422">
    <property type="entry name" value="PyrdxlP-dep_Trfase_small"/>
</dbReference>
<dbReference type="NCBIfam" id="NF000818">
    <property type="entry name" value="PRK00062.1"/>
    <property type="match status" value="1"/>
</dbReference>
<dbReference type="PANTHER" id="PTHR43713">
    <property type="entry name" value="GLUTAMATE-1-SEMIALDEHYDE 2,1-AMINOMUTASE"/>
    <property type="match status" value="1"/>
</dbReference>
<dbReference type="PANTHER" id="PTHR43713:SF3">
    <property type="entry name" value="GLUTAMATE-1-SEMIALDEHYDE 2,1-AMINOMUTASE 1, CHLOROPLASTIC-RELATED"/>
    <property type="match status" value="1"/>
</dbReference>
<dbReference type="Pfam" id="PF00202">
    <property type="entry name" value="Aminotran_3"/>
    <property type="match status" value="1"/>
</dbReference>
<dbReference type="SUPFAM" id="SSF53383">
    <property type="entry name" value="PLP-dependent transferases"/>
    <property type="match status" value="1"/>
</dbReference>
<dbReference type="PROSITE" id="PS00600">
    <property type="entry name" value="AA_TRANSFER_CLASS_3"/>
    <property type="match status" value="1"/>
</dbReference>
<comment type="catalytic activity">
    <reaction>
        <text>(S)-4-amino-5-oxopentanoate = 5-aminolevulinate</text>
        <dbReference type="Rhea" id="RHEA:14265"/>
        <dbReference type="ChEBI" id="CHEBI:57501"/>
        <dbReference type="ChEBI" id="CHEBI:356416"/>
        <dbReference type="EC" id="5.4.3.8"/>
    </reaction>
</comment>
<comment type="cofactor">
    <cofactor>
        <name>pyridoxal 5'-phosphate</name>
        <dbReference type="ChEBI" id="CHEBI:597326"/>
    </cofactor>
</comment>
<comment type="pathway">
    <text>Porphyrin-containing compound metabolism; protoporphyrin-IX biosynthesis; 5-aminolevulinate from L-glutamyl-tRNA(Glu): step 2/2.</text>
</comment>
<comment type="subunit">
    <text evidence="1">Homodimer.</text>
</comment>
<comment type="subcellular location">
    <subcellularLocation>
        <location evidence="2">Cytoplasm</location>
    </subcellularLocation>
</comment>
<comment type="similarity">
    <text evidence="2">Belongs to the class-III pyridoxal-phosphate-dependent aminotransferase family. HemL subfamily.</text>
</comment>
<feature type="chain" id="PRO_0000120432" description="Glutamate-1-semialdehyde 2,1-aminomutase">
    <location>
        <begin position="1"/>
        <end position="441"/>
    </location>
</feature>
<feature type="modified residue" description="N6-(pyridoxal phosphate)lysine" evidence="1">
    <location>
        <position position="270"/>
    </location>
</feature>
<protein>
    <recommendedName>
        <fullName>Glutamate-1-semialdehyde 2,1-aminomutase</fullName>
        <shortName>GSA</shortName>
        <ecNumber>5.4.3.8</ecNumber>
    </recommendedName>
    <alternativeName>
        <fullName>Glutamate-1-semialdehyde aminotransferase</fullName>
        <shortName>GSA-AT</shortName>
    </alternativeName>
</protein>
<reference key="1">
    <citation type="journal article" date="1993" name="Appl. Environ. Microbiol.">
        <title>Cloning and characterization of the gene encoding glutamate 1-semialdehyde 2,1-aminomutase, which is involved in delta-aminolevulinic acid synthesis in Propionibacterium freudenreichii.</title>
        <authorList>
            <person name="Murakami K."/>
            <person name="Hashimoto Y."/>
            <person name="Murooka Y."/>
        </authorList>
    </citation>
    <scope>NUCLEOTIDE SEQUENCE [GENOMIC DNA]</scope>
    <source>
        <strain>ATCC 6207 / DSM 20271 / LMG 16412 / NBRC 12424 / NCIMB 5959 / NCTC 10470 / NRRL B-3523</strain>
    </source>
</reference>
<keyword id="KW-0963">Cytoplasm</keyword>
<keyword id="KW-0413">Isomerase</keyword>
<keyword id="KW-0627">Porphyrin biosynthesis</keyword>
<keyword id="KW-0663">Pyridoxal phosphate</keyword>
<accession>Q06774</accession>
<gene>
    <name type="primary">hemL</name>
</gene>
<evidence type="ECO:0000250" key="1"/>
<evidence type="ECO:0000305" key="2"/>